<keyword id="KW-0143">Chaperone</keyword>
<keyword id="KW-0186">Copper</keyword>
<keyword id="KW-0963">Cytoplasm</keyword>
<keyword id="KW-1015">Disulfide bond</keyword>
<keyword id="KW-1017">Isopeptide bond</keyword>
<keyword id="KW-0479">Metal-binding</keyword>
<keyword id="KW-1185">Reference proteome</keyword>
<keyword id="KW-0832">Ubl conjugation</keyword>
<keyword id="KW-0862">Zinc</keyword>
<proteinExistence type="evidence at transcript level"/>
<gene>
    <name evidence="2" type="primary">CCS</name>
</gene>
<protein>
    <recommendedName>
        <fullName evidence="2">Copper chaperone for superoxide dismutase</fullName>
    </recommendedName>
    <alternativeName>
        <fullName>Superoxide dismutase copper chaperone</fullName>
    </alternativeName>
</protein>
<evidence type="ECO:0000250" key="1"/>
<evidence type="ECO:0000250" key="2">
    <source>
        <dbReference type="UniProtKB" id="O14618"/>
    </source>
</evidence>
<evidence type="ECO:0000255" key="3">
    <source>
        <dbReference type="PROSITE-ProRule" id="PRU00280"/>
    </source>
</evidence>
<evidence type="ECO:0000305" key="4"/>
<comment type="function">
    <text evidence="1">Delivers copper to copper zinc superoxide dismutase (SOD1).</text>
</comment>
<comment type="cofactor">
    <cofactor evidence="2">
        <name>Cu(2+)</name>
        <dbReference type="ChEBI" id="CHEBI:29036"/>
    </cofactor>
    <text evidence="2">Binds 2 copper ions per subunit.</text>
</comment>
<comment type="cofactor">
    <cofactor evidence="2">
        <name>Zn(2+)</name>
        <dbReference type="ChEBI" id="CHEBI:29105"/>
    </cofactor>
    <text evidence="2">Binds 1 zinc ion per subunit.</text>
</comment>
<comment type="subunit">
    <text evidence="2">Homodimer, and heterodimer with SOD1. Interacts with COMMD1. Interacts with XIAP/BIRC4. Interacts with SLC31A1(via C-terminal domain); this interaction is Cu(1+)-mediated. The heterodimer CCS:SOD1 interacts with SLC31A1; this heterotrimer is Cu(1+)-mediated and its maintenance is regulated through SOD1 activation.</text>
</comment>
<comment type="subcellular location">
    <subcellularLocation>
        <location evidence="1">Cytoplasm</location>
    </subcellularLocation>
</comment>
<comment type="PTM">
    <text>Ubiquitinion by XIAP/BIRC4 leads to enhancement of its chaperone activity toward its physiologic target, SOD1, rather than proteasomal degradation. XIAP/BIRC4 preferentially ubiquitinates at Lys-241.</text>
</comment>
<comment type="similarity">
    <text evidence="4">In the C-terminal section; belongs to the Cu-Zn superoxide dismutase family.</text>
</comment>
<sequence>MASDSRDRETACMLEFAVQMTCQSCVDAVSRSLQGVAGIQSVEVQLENQMVLVQTTLPSQVVQALLEDTGRQAVLKGMGSGRWQNLEAAVAILGGSGPVQGVVRFLQLTPERCLIEGTIDGLKPGLHGLHVHQFGDLTRNCNSCGDHFNPDGMSHGGPQDSDRHRGDLGNVCADADGRAVFRMEDELLKVWDVIGRSLVIDEGEDDLGRGGHPLSKITGNSGERLACGIIARSAGLFQNPKQICSCDGLTIWEERXRPIAGEGRKEPAQPPAHL</sequence>
<reference key="1">
    <citation type="journal article" date="2004" name="Anim. Genet.">
        <title>Sequencing and mapping of the porcine CCS gene.</title>
        <authorList>
            <person name="Silahtaroglu A.N."/>
            <person name="Jensen L.R."/>
            <person name="Harboe T.L."/>
            <person name="Horn P."/>
            <person name="Bendixen C."/>
            <person name="Tommerup N."/>
            <person name="Tumer Z."/>
        </authorList>
    </citation>
    <scope>NUCLEOTIDE SEQUENCE [MRNA]</scope>
</reference>
<feature type="chain" id="PRO_0000213545" description="Copper chaperone for superoxide dismutase">
    <location>
        <begin position="1"/>
        <end position="274"/>
    </location>
</feature>
<feature type="domain" description="HMA" evidence="3">
    <location>
        <begin position="11"/>
        <end position="74"/>
    </location>
</feature>
<feature type="region of interest" description="Superoxide dismutase-like">
    <location>
        <begin position="88"/>
        <end position="234"/>
    </location>
</feature>
<feature type="binding site" evidence="3">
    <location>
        <position position="22"/>
    </location>
    <ligand>
        <name>Cu cation</name>
        <dbReference type="ChEBI" id="CHEBI:23378"/>
        <label>1</label>
    </ligand>
</feature>
<feature type="binding site" evidence="3">
    <location>
        <position position="25"/>
    </location>
    <ligand>
        <name>Cu cation</name>
        <dbReference type="ChEBI" id="CHEBI:23378"/>
        <label>1</label>
    </ligand>
</feature>
<feature type="binding site">
    <location>
        <position position="147"/>
    </location>
    <ligand>
        <name>Zn(2+)</name>
        <dbReference type="ChEBI" id="CHEBI:29105"/>
    </ligand>
</feature>
<feature type="binding site">
    <location>
        <position position="155"/>
    </location>
    <ligand>
        <name>Zn(2+)</name>
        <dbReference type="ChEBI" id="CHEBI:29105"/>
    </ligand>
</feature>
<feature type="binding site">
    <location>
        <position position="164"/>
    </location>
    <ligand>
        <name>Zn(2+)</name>
        <dbReference type="ChEBI" id="CHEBI:29105"/>
    </ligand>
</feature>
<feature type="binding site">
    <location>
        <position position="167"/>
    </location>
    <ligand>
        <name>Zn(2+)</name>
        <dbReference type="ChEBI" id="CHEBI:29105"/>
    </ligand>
</feature>
<feature type="binding site">
    <location>
        <position position="244"/>
    </location>
    <ligand>
        <name>Cu cation</name>
        <dbReference type="ChEBI" id="CHEBI:23378"/>
        <label>2</label>
    </ligand>
</feature>
<feature type="binding site">
    <location>
        <position position="246"/>
    </location>
    <ligand>
        <name>Cu cation</name>
        <dbReference type="ChEBI" id="CHEBI:23378"/>
        <label>2</label>
    </ligand>
</feature>
<feature type="disulfide bond" evidence="1">
    <location>
        <begin position="141"/>
        <end position="227"/>
    </location>
</feature>
<feature type="cross-link" description="Glycyl lysine isopeptide (Lys-Gly) (interchain with G-Cter in ubiquitin)" evidence="2">
    <location>
        <position position="76"/>
    </location>
</feature>
<feature type="cross-link" description="Glycyl lysine isopeptide (Lys-Gly) (interchain with G-Cter in ubiquitin)" evidence="2">
    <location>
        <position position="189"/>
    </location>
</feature>
<feature type="cross-link" description="Glycyl lysine isopeptide (Lys-Gly) (interchain with G-Cter in ubiquitin)" evidence="2">
    <location>
        <position position="216"/>
    </location>
</feature>
<feature type="cross-link" description="Glycyl lysine isopeptide (Lys-Gly) (interchain with G-Cter in ubiquitin)" evidence="2">
    <location>
        <position position="241"/>
    </location>
</feature>
<name>CCS_PIG</name>
<organism>
    <name type="scientific">Sus scrofa</name>
    <name type="common">Pig</name>
    <dbReference type="NCBI Taxonomy" id="9823"/>
    <lineage>
        <taxon>Eukaryota</taxon>
        <taxon>Metazoa</taxon>
        <taxon>Chordata</taxon>
        <taxon>Craniata</taxon>
        <taxon>Vertebrata</taxon>
        <taxon>Euteleostomi</taxon>
        <taxon>Mammalia</taxon>
        <taxon>Eutheria</taxon>
        <taxon>Laurasiatheria</taxon>
        <taxon>Artiodactyla</taxon>
        <taxon>Suina</taxon>
        <taxon>Suidae</taxon>
        <taxon>Sus</taxon>
    </lineage>
</organism>
<dbReference type="EMBL" id="AY573056">
    <property type="protein sequence ID" value="AAS91658.1"/>
    <property type="molecule type" value="mRNA"/>
</dbReference>
<dbReference type="RefSeq" id="NP_001001866.1">
    <property type="nucleotide sequence ID" value="NM_001001866.1"/>
</dbReference>
<dbReference type="FunCoup" id="Q6PWT7">
    <property type="interactions" value="459"/>
</dbReference>
<dbReference type="STRING" id="9823.ENSSSCP00000054794"/>
<dbReference type="PaxDb" id="9823-ENSSSCP00000027331"/>
<dbReference type="PeptideAtlas" id="Q6PWT7"/>
<dbReference type="GeneID" id="414913"/>
<dbReference type="KEGG" id="ssc:414913"/>
<dbReference type="CTD" id="9973"/>
<dbReference type="eggNOG" id="KOG4656">
    <property type="taxonomic scope" value="Eukaryota"/>
</dbReference>
<dbReference type="InParanoid" id="Q6PWT7"/>
<dbReference type="OrthoDB" id="666972at2759"/>
<dbReference type="Proteomes" id="UP000008227">
    <property type="component" value="Unplaced"/>
</dbReference>
<dbReference type="Proteomes" id="UP000314985">
    <property type="component" value="Unplaced"/>
</dbReference>
<dbReference type="Proteomes" id="UP000694570">
    <property type="component" value="Unplaced"/>
</dbReference>
<dbReference type="Proteomes" id="UP000694571">
    <property type="component" value="Unplaced"/>
</dbReference>
<dbReference type="Proteomes" id="UP000694720">
    <property type="component" value="Unplaced"/>
</dbReference>
<dbReference type="Proteomes" id="UP000694722">
    <property type="component" value="Unplaced"/>
</dbReference>
<dbReference type="Proteomes" id="UP000694723">
    <property type="component" value="Unplaced"/>
</dbReference>
<dbReference type="Proteomes" id="UP000694724">
    <property type="component" value="Unplaced"/>
</dbReference>
<dbReference type="Proteomes" id="UP000694725">
    <property type="component" value="Unplaced"/>
</dbReference>
<dbReference type="Proteomes" id="UP000694726">
    <property type="component" value="Unplaced"/>
</dbReference>
<dbReference type="Proteomes" id="UP000694727">
    <property type="component" value="Unplaced"/>
</dbReference>
<dbReference type="Proteomes" id="UP000694728">
    <property type="component" value="Unplaced"/>
</dbReference>
<dbReference type="GO" id="GO:0005737">
    <property type="term" value="C:cytoplasm"/>
    <property type="evidence" value="ECO:0007669"/>
    <property type="project" value="UniProtKB-SubCell"/>
</dbReference>
<dbReference type="GO" id="GO:0005507">
    <property type="term" value="F:copper ion binding"/>
    <property type="evidence" value="ECO:0000318"/>
    <property type="project" value="GO_Central"/>
</dbReference>
<dbReference type="GO" id="GO:0016532">
    <property type="term" value="F:superoxide dismutase copper chaperone activity"/>
    <property type="evidence" value="ECO:0000318"/>
    <property type="project" value="GO_Central"/>
</dbReference>
<dbReference type="GO" id="GO:0019430">
    <property type="term" value="P:removal of superoxide radicals"/>
    <property type="evidence" value="ECO:0000318"/>
    <property type="project" value="GO_Central"/>
</dbReference>
<dbReference type="CDD" id="cd00305">
    <property type="entry name" value="Cu-Zn_Superoxide_Dismutase"/>
    <property type="match status" value="1"/>
</dbReference>
<dbReference type="CDD" id="cd00371">
    <property type="entry name" value="HMA"/>
    <property type="match status" value="1"/>
</dbReference>
<dbReference type="FunFam" id="2.60.40.200:FF:000004">
    <property type="entry name" value="Copper chaperone for superoxide dismutase"/>
    <property type="match status" value="1"/>
</dbReference>
<dbReference type="FunFam" id="3.30.70.100:FF:000027">
    <property type="entry name" value="Copper chaperone for superoxide dismutase"/>
    <property type="match status" value="1"/>
</dbReference>
<dbReference type="Gene3D" id="3.30.70.100">
    <property type="match status" value="1"/>
</dbReference>
<dbReference type="Gene3D" id="2.60.40.200">
    <property type="entry name" value="Superoxide dismutase, copper/zinc binding domain"/>
    <property type="match status" value="1"/>
</dbReference>
<dbReference type="InterPro" id="IPR006121">
    <property type="entry name" value="HMA_dom"/>
</dbReference>
<dbReference type="InterPro" id="IPR036163">
    <property type="entry name" value="HMA_dom_sf"/>
</dbReference>
<dbReference type="InterPro" id="IPR036423">
    <property type="entry name" value="SOD-like_Cu/Zn_dom_sf"/>
</dbReference>
<dbReference type="InterPro" id="IPR024134">
    <property type="entry name" value="SOD_Cu/Zn_/chaperone"/>
</dbReference>
<dbReference type="InterPro" id="IPR018152">
    <property type="entry name" value="SOD_Cu/Zn_BS"/>
</dbReference>
<dbReference type="InterPro" id="IPR001424">
    <property type="entry name" value="SOD_Cu_Zn_dom"/>
</dbReference>
<dbReference type="PANTHER" id="PTHR10003">
    <property type="entry name" value="SUPEROXIDE DISMUTASE CU-ZN -RELATED"/>
    <property type="match status" value="1"/>
</dbReference>
<dbReference type="Pfam" id="PF00403">
    <property type="entry name" value="HMA"/>
    <property type="match status" value="1"/>
</dbReference>
<dbReference type="Pfam" id="PF00080">
    <property type="entry name" value="Sod_Cu"/>
    <property type="match status" value="1"/>
</dbReference>
<dbReference type="PRINTS" id="PR00068">
    <property type="entry name" value="CUZNDISMTASE"/>
</dbReference>
<dbReference type="SUPFAM" id="SSF49329">
    <property type="entry name" value="Cu,Zn superoxide dismutase-like"/>
    <property type="match status" value="1"/>
</dbReference>
<dbReference type="SUPFAM" id="SSF55008">
    <property type="entry name" value="HMA, heavy metal-associated domain"/>
    <property type="match status" value="1"/>
</dbReference>
<dbReference type="PROSITE" id="PS50846">
    <property type="entry name" value="HMA_2"/>
    <property type="match status" value="1"/>
</dbReference>
<dbReference type="PROSITE" id="PS00332">
    <property type="entry name" value="SOD_CU_ZN_2"/>
    <property type="match status" value="1"/>
</dbReference>
<accession>Q6PWT7</accession>